<comment type="function">
    <text evidence="1">Catalyzes the synthesis of the hydroxymethylpyrimidine phosphate (HMP-P) moiety of thiamine from aminoimidazole ribotide (AIR) in a radical S-adenosyl-L-methionine (SAM)-dependent reaction.</text>
</comment>
<comment type="catalytic activity">
    <reaction evidence="1">
        <text>5-amino-1-(5-phospho-beta-D-ribosyl)imidazole + S-adenosyl-L-methionine = 4-amino-2-methyl-5-(phosphooxymethyl)pyrimidine + CO + 5'-deoxyadenosine + formate + L-methionine + 3 H(+)</text>
        <dbReference type="Rhea" id="RHEA:24840"/>
        <dbReference type="ChEBI" id="CHEBI:15378"/>
        <dbReference type="ChEBI" id="CHEBI:15740"/>
        <dbReference type="ChEBI" id="CHEBI:17245"/>
        <dbReference type="ChEBI" id="CHEBI:17319"/>
        <dbReference type="ChEBI" id="CHEBI:57844"/>
        <dbReference type="ChEBI" id="CHEBI:58354"/>
        <dbReference type="ChEBI" id="CHEBI:59789"/>
        <dbReference type="ChEBI" id="CHEBI:137981"/>
        <dbReference type="EC" id="4.1.99.17"/>
    </reaction>
</comment>
<comment type="cofactor">
    <cofactor evidence="1">
        <name>[4Fe-4S] cluster</name>
        <dbReference type="ChEBI" id="CHEBI:49883"/>
    </cofactor>
    <text evidence="1">Binds 1 [4Fe-4S] cluster per subunit. The cluster is coordinated with 3 cysteines and an exchangeable S-adenosyl-L-methionine.</text>
</comment>
<comment type="pathway">
    <text evidence="1">Cofactor biosynthesis; thiamine diphosphate biosynthesis.</text>
</comment>
<comment type="similarity">
    <text evidence="1">Belongs to the ThiC family.</text>
</comment>
<keyword id="KW-0004">4Fe-4S</keyword>
<keyword id="KW-0408">Iron</keyword>
<keyword id="KW-0411">Iron-sulfur</keyword>
<keyword id="KW-0456">Lyase</keyword>
<keyword id="KW-0479">Metal-binding</keyword>
<keyword id="KW-1185">Reference proteome</keyword>
<keyword id="KW-0949">S-adenosyl-L-methionine</keyword>
<keyword id="KW-0784">Thiamine biosynthesis</keyword>
<keyword id="KW-0862">Zinc</keyword>
<reference key="1">
    <citation type="journal article" date="1997" name="J. Bacteriol.">
        <title>Complete genome sequence of Methanobacterium thermoautotrophicum deltaH: functional analysis and comparative genomics.</title>
        <authorList>
            <person name="Smith D.R."/>
            <person name="Doucette-Stamm L.A."/>
            <person name="Deloughery C."/>
            <person name="Lee H.-M."/>
            <person name="Dubois J."/>
            <person name="Aldredge T."/>
            <person name="Bashirzadeh R."/>
            <person name="Blakely D."/>
            <person name="Cook R."/>
            <person name="Gilbert K."/>
            <person name="Harrison D."/>
            <person name="Hoang L."/>
            <person name="Keagle P."/>
            <person name="Lumm W."/>
            <person name="Pothier B."/>
            <person name="Qiu D."/>
            <person name="Spadafora R."/>
            <person name="Vicare R."/>
            <person name="Wang Y."/>
            <person name="Wierzbowski J."/>
            <person name="Gibson R."/>
            <person name="Jiwani N."/>
            <person name="Caruso A."/>
            <person name="Bush D."/>
            <person name="Safer H."/>
            <person name="Patwell D."/>
            <person name="Prabhakar S."/>
            <person name="McDougall S."/>
            <person name="Shimer G."/>
            <person name="Goyal A."/>
            <person name="Pietrovski S."/>
            <person name="Church G.M."/>
            <person name="Daniels C.J."/>
            <person name="Mao J.-I."/>
            <person name="Rice P."/>
            <person name="Noelling J."/>
            <person name="Reeve J.N."/>
        </authorList>
    </citation>
    <scope>NUCLEOTIDE SEQUENCE [LARGE SCALE GENOMIC DNA]</scope>
    <source>
        <strain>ATCC 29096 / DSM 1053 / JCM 10044 / NBRC 100330 / Delta H</strain>
    </source>
</reference>
<protein>
    <recommendedName>
        <fullName evidence="1">Phosphomethylpyrimidine synthase 2</fullName>
        <ecNumber evidence="1">4.1.99.17</ecNumber>
    </recommendedName>
    <alternativeName>
        <fullName evidence="1">Hydroxymethylpyrimidine phosphate synthase 2</fullName>
        <shortName evidence="1">HMP-P synthase 2</shortName>
        <shortName evidence="1">HMP-phosphate synthase 2</shortName>
        <shortName evidence="1">HMPP synthase 2</shortName>
    </alternativeName>
    <alternativeName>
        <fullName evidence="1">Thiamine biosynthesis protein ThiC 2</fullName>
    </alternativeName>
</protein>
<feature type="chain" id="PRO_0000152868" description="Phosphomethylpyrimidine synthase 2">
    <location>
        <begin position="1"/>
        <end position="424"/>
    </location>
</feature>
<feature type="binding site" evidence="1">
    <location>
        <position position="65"/>
    </location>
    <ligand>
        <name>substrate</name>
    </ligand>
</feature>
<feature type="binding site" evidence="1">
    <location>
        <position position="94"/>
    </location>
    <ligand>
        <name>substrate</name>
    </ligand>
</feature>
<feature type="binding site" evidence="1">
    <location>
        <position position="123"/>
    </location>
    <ligand>
        <name>substrate</name>
    </ligand>
</feature>
<feature type="binding site" evidence="1">
    <location>
        <position position="162"/>
    </location>
    <ligand>
        <name>substrate</name>
    </ligand>
</feature>
<feature type="binding site" evidence="1">
    <location>
        <begin position="184"/>
        <end position="186"/>
    </location>
    <ligand>
        <name>substrate</name>
    </ligand>
</feature>
<feature type="binding site" evidence="1">
    <location>
        <begin position="225"/>
        <end position="228"/>
    </location>
    <ligand>
        <name>substrate</name>
    </ligand>
</feature>
<feature type="binding site" evidence="1">
    <location>
        <position position="264"/>
    </location>
    <ligand>
        <name>substrate</name>
    </ligand>
</feature>
<feature type="binding site" evidence="1">
    <location>
        <position position="268"/>
    </location>
    <ligand>
        <name>Zn(2+)</name>
        <dbReference type="ChEBI" id="CHEBI:29105"/>
    </ligand>
</feature>
<feature type="binding site" evidence="1">
    <location>
        <position position="291"/>
    </location>
    <ligand>
        <name>substrate</name>
    </ligand>
</feature>
<feature type="binding site" evidence="1">
    <location>
        <position position="332"/>
    </location>
    <ligand>
        <name>Zn(2+)</name>
        <dbReference type="ChEBI" id="CHEBI:29105"/>
    </ligand>
</feature>
<feature type="binding site" evidence="1">
    <location>
        <position position="408"/>
    </location>
    <ligand>
        <name>[4Fe-4S] cluster</name>
        <dbReference type="ChEBI" id="CHEBI:49883"/>
        <note>4Fe-4S-S-AdoMet</note>
    </ligand>
</feature>
<feature type="binding site" evidence="1">
    <location>
        <position position="411"/>
    </location>
    <ligand>
        <name>[4Fe-4S] cluster</name>
        <dbReference type="ChEBI" id="CHEBI:49883"/>
        <note>4Fe-4S-S-AdoMet</note>
    </ligand>
</feature>
<feature type="binding site" evidence="1">
    <location>
        <position position="415"/>
    </location>
    <ligand>
        <name>[4Fe-4S] cluster</name>
        <dbReference type="ChEBI" id="CHEBI:49883"/>
        <note>4Fe-4S-S-AdoMet</note>
    </ligand>
</feature>
<dbReference type="EC" id="4.1.99.17" evidence="1"/>
<dbReference type="EMBL" id="AE000666">
    <property type="protein sequence ID" value="AAB86049.1"/>
    <property type="molecule type" value="Genomic_DNA"/>
</dbReference>
<dbReference type="PIR" id="C69077">
    <property type="entry name" value="C69077"/>
</dbReference>
<dbReference type="RefSeq" id="WP_010877184.1">
    <property type="nucleotide sequence ID" value="NC_000916.1"/>
</dbReference>
<dbReference type="SMR" id="O27617"/>
<dbReference type="FunCoup" id="O27617">
    <property type="interactions" value="121"/>
</dbReference>
<dbReference type="STRING" id="187420.MTH_1576"/>
<dbReference type="PaxDb" id="187420-MTH_1576"/>
<dbReference type="EnsemblBacteria" id="AAB86049">
    <property type="protein sequence ID" value="AAB86049"/>
    <property type="gene ID" value="MTH_1576"/>
</dbReference>
<dbReference type="GeneID" id="1471845"/>
<dbReference type="KEGG" id="mth:MTH_1576"/>
<dbReference type="PATRIC" id="fig|187420.15.peg.1539"/>
<dbReference type="HOGENOM" id="CLU_013181_2_2_2"/>
<dbReference type="InParanoid" id="O27617"/>
<dbReference type="UniPathway" id="UPA00060"/>
<dbReference type="Proteomes" id="UP000005223">
    <property type="component" value="Chromosome"/>
</dbReference>
<dbReference type="GO" id="GO:0051539">
    <property type="term" value="F:4 iron, 4 sulfur cluster binding"/>
    <property type="evidence" value="ECO:0007669"/>
    <property type="project" value="UniProtKB-KW"/>
</dbReference>
<dbReference type="GO" id="GO:0016830">
    <property type="term" value="F:carbon-carbon lyase activity"/>
    <property type="evidence" value="ECO:0007669"/>
    <property type="project" value="InterPro"/>
</dbReference>
<dbReference type="GO" id="GO:0008270">
    <property type="term" value="F:zinc ion binding"/>
    <property type="evidence" value="ECO:0007669"/>
    <property type="project" value="UniProtKB-UniRule"/>
</dbReference>
<dbReference type="GO" id="GO:0009228">
    <property type="term" value="P:thiamine biosynthetic process"/>
    <property type="evidence" value="ECO:0007669"/>
    <property type="project" value="UniProtKB-KW"/>
</dbReference>
<dbReference type="GO" id="GO:0009229">
    <property type="term" value="P:thiamine diphosphate biosynthetic process"/>
    <property type="evidence" value="ECO:0007669"/>
    <property type="project" value="UniProtKB-UniRule"/>
</dbReference>
<dbReference type="FunFam" id="3.20.20.540:FF:000001">
    <property type="entry name" value="Phosphomethylpyrimidine synthase"/>
    <property type="match status" value="1"/>
</dbReference>
<dbReference type="Gene3D" id="6.10.250.620">
    <property type="match status" value="1"/>
</dbReference>
<dbReference type="Gene3D" id="3.20.20.540">
    <property type="entry name" value="Radical SAM ThiC family, central domain"/>
    <property type="match status" value="1"/>
</dbReference>
<dbReference type="HAMAP" id="MF_00089">
    <property type="entry name" value="ThiC"/>
    <property type="match status" value="1"/>
</dbReference>
<dbReference type="InterPro" id="IPR037509">
    <property type="entry name" value="ThiC"/>
</dbReference>
<dbReference type="InterPro" id="IPR038521">
    <property type="entry name" value="ThiC/Bza_core_dom"/>
</dbReference>
<dbReference type="InterPro" id="IPR002817">
    <property type="entry name" value="ThiC/BzaA/B"/>
</dbReference>
<dbReference type="NCBIfam" id="NF009895">
    <property type="entry name" value="PRK13352.1"/>
    <property type="match status" value="1"/>
</dbReference>
<dbReference type="NCBIfam" id="TIGR00190">
    <property type="entry name" value="thiC"/>
    <property type="match status" value="1"/>
</dbReference>
<dbReference type="PANTHER" id="PTHR30557:SF1">
    <property type="entry name" value="PHOSPHOMETHYLPYRIMIDINE SYNTHASE, CHLOROPLASTIC"/>
    <property type="match status" value="1"/>
</dbReference>
<dbReference type="PANTHER" id="PTHR30557">
    <property type="entry name" value="THIAMINE BIOSYNTHESIS PROTEIN THIC"/>
    <property type="match status" value="1"/>
</dbReference>
<dbReference type="Pfam" id="PF01964">
    <property type="entry name" value="ThiC_Rad_SAM"/>
    <property type="match status" value="1"/>
</dbReference>
<dbReference type="SFLD" id="SFLDF00407">
    <property type="entry name" value="phosphomethylpyrimidine_syntha"/>
    <property type="match status" value="1"/>
</dbReference>
<dbReference type="SFLD" id="SFLDG01114">
    <property type="entry name" value="phosphomethylpyrimidine_syntha"/>
    <property type="match status" value="1"/>
</dbReference>
<dbReference type="SFLD" id="SFLDS00113">
    <property type="entry name" value="Radical_SAM_Phosphomethylpyrim"/>
    <property type="match status" value="1"/>
</dbReference>
<evidence type="ECO:0000255" key="1">
    <source>
        <dbReference type="HAMAP-Rule" id="MF_00089"/>
    </source>
</evidence>
<accession>O27617</accession>
<gene>
    <name evidence="1" type="primary">thiC2</name>
    <name type="ordered locus">MTH_1576</name>
</gene>
<proteinExistence type="inferred from homology"/>
<organism>
    <name type="scientific">Methanothermobacter thermautotrophicus (strain ATCC 29096 / DSM 1053 / JCM 10044 / NBRC 100330 / Delta H)</name>
    <name type="common">Methanobacterium thermoautotrophicum</name>
    <dbReference type="NCBI Taxonomy" id="187420"/>
    <lineage>
        <taxon>Archaea</taxon>
        <taxon>Methanobacteriati</taxon>
        <taxon>Methanobacteriota</taxon>
        <taxon>Methanomada group</taxon>
        <taxon>Methanobacteria</taxon>
        <taxon>Methanobacteriales</taxon>
        <taxon>Methanobacteriaceae</taxon>
        <taxon>Methanothermobacter</taxon>
    </lineage>
</organism>
<name>THIC2_METTH</name>
<sequence>MTQMEEARKGNITPEMEEVARKENLDIQMLIRGIANGRIVIPSNINRESSPCGIGENLSTKINANIGSSSKMEDIELEVDKALAAVEYGADAVMDLSTGPMLRDVRKAVLEAVDVPVGTVPIYEAGVEAFMSDGAVVDMDEDDMFRAIENQARDGVDFMTVHSGITLETVERAQRSGRIMGIVSRGGAFLAAWIMQNQEENPLYSNYEYLLEVAYEYDVTLSLGDGLRPGCLADASDIPQISELLTLAELVERARDADVQCMVEGPGHMPLDQIAANMKIQKEVCDGAPFYVLGPIVTDMAPGYDHISAAIGGAVAAMNGADFLCYVTPAEHLAIPGVQDVIEGVIASRIAAQAADAARKLPGAWDSELEMADARRSFDWDKQFKLAFDSKKPYEYRMQCPIEDSEMCSMCGEYCALRILREDR</sequence>